<keyword id="KW-0002">3D-structure</keyword>
<keyword id="KW-0009">Actin-binding</keyword>
<keyword id="KW-1003">Cell membrane</keyword>
<keyword id="KW-0963">Cytoplasm</keyword>
<keyword id="KW-0206">Cytoskeleton</keyword>
<keyword id="KW-0472">Membrane</keyword>
<keyword id="KW-0597">Phosphoprotein</keyword>
<keyword id="KW-1185">Reference proteome</keyword>
<keyword id="KW-0812">Transmembrane</keyword>
<keyword id="KW-1133">Transmembrane helix</keyword>
<organism>
    <name type="scientific">Saccharomyces cerevisiae (strain ATCC 204508 / S288c)</name>
    <name type="common">Baker's yeast</name>
    <dbReference type="NCBI Taxonomy" id="559292"/>
    <lineage>
        <taxon>Eukaryota</taxon>
        <taxon>Fungi</taxon>
        <taxon>Dikarya</taxon>
        <taxon>Ascomycota</taxon>
        <taxon>Saccharomycotina</taxon>
        <taxon>Saccharomycetes</taxon>
        <taxon>Saccharomycetales</taxon>
        <taxon>Saccharomycetaceae</taxon>
        <taxon>Saccharomyces</taxon>
    </lineage>
</organism>
<name>SLA2_YEAST</name>
<feature type="chain" id="PRO_0000071945" description="Protein SLA2">
    <location>
        <begin position="1"/>
        <end position="968"/>
    </location>
</feature>
<feature type="transmembrane region" description="Helical" evidence="1">
    <location>
        <begin position="772"/>
        <end position="791"/>
    </location>
</feature>
<feature type="domain" description="ENTH" evidence="1">
    <location>
        <begin position="1"/>
        <end position="127"/>
    </location>
</feature>
<feature type="domain" description="I/LWEQ" evidence="2">
    <location>
        <begin position="717"/>
        <end position="965"/>
    </location>
</feature>
<feature type="region of interest" description="Disordered" evidence="3">
    <location>
        <begin position="280"/>
        <end position="324"/>
    </location>
</feature>
<feature type="compositionally biased region" description="Polar residues" evidence="3">
    <location>
        <begin position="311"/>
        <end position="324"/>
    </location>
</feature>
<feature type="modified residue" description="Phosphothreonine" evidence="6">
    <location>
        <position position="294"/>
    </location>
</feature>
<feature type="modified residue" description="Phosphothreonine" evidence="8">
    <location>
        <position position="298"/>
    </location>
</feature>
<feature type="modified residue" description="Phosphoserine" evidence="6 8">
    <location>
        <position position="308"/>
    </location>
</feature>
<feature type="modified residue" description="Phosphoserine" evidence="7">
    <location>
        <position position="555"/>
    </location>
</feature>
<feature type="sequence conflict" description="In Ref. 2; AAA74726." evidence="5" ref="2">
    <original>P</original>
    <variation>A</variation>
    <location>
        <position position="52"/>
    </location>
</feature>
<feature type="sequence conflict" description="In Ref. 3; CAA96148/CAA96149." evidence="5" ref="3">
    <original>A</original>
    <variation>R</variation>
    <location>
        <position position="344"/>
    </location>
</feature>
<feature type="sequence conflict" description="In Ref. 5; AAA19161." evidence="5" ref="5">
    <original>A</original>
    <variation>R</variation>
    <location>
        <position position="560"/>
    </location>
</feature>
<feature type="sequence conflict" description="In Ref. 5; AAA19161." evidence="5" ref="5">
    <original>S</original>
    <variation>C</variation>
    <location>
        <position position="915"/>
    </location>
</feature>
<dbReference type="EMBL" id="Z22811">
    <property type="protein sequence ID" value="CAA80464.1"/>
    <property type="molecule type" value="Genomic_DNA"/>
</dbReference>
<dbReference type="EMBL" id="L12352">
    <property type="protein sequence ID" value="AAA74726.1"/>
    <property type="molecule type" value="Genomic_DNA"/>
</dbReference>
<dbReference type="EMBL" id="Z71519">
    <property type="protein sequence ID" value="CAA96149.1"/>
    <property type="molecule type" value="Genomic_DNA"/>
</dbReference>
<dbReference type="EMBL" id="Z71518">
    <property type="protein sequence ID" value="CAA96148.1"/>
    <property type="molecule type" value="Genomic_DNA"/>
</dbReference>
<dbReference type="EMBL" id="U07938">
    <property type="protein sequence ID" value="AAA19161.1"/>
    <property type="status" value="ALT_FRAME"/>
    <property type="molecule type" value="Unassigned_DNA"/>
</dbReference>
<dbReference type="EMBL" id="Z69381">
    <property type="protein sequence ID" value="CAA93355.1"/>
    <property type="molecule type" value="Genomic_DNA"/>
</dbReference>
<dbReference type="EMBL" id="BK006947">
    <property type="protein sequence ID" value="DAA10316.2"/>
    <property type="molecule type" value="Genomic_DNA"/>
</dbReference>
<dbReference type="PIR" id="S63211">
    <property type="entry name" value="S63211"/>
</dbReference>
<dbReference type="RefSeq" id="NP_014156.2">
    <property type="nucleotide sequence ID" value="NM_001183081.2"/>
</dbReference>
<dbReference type="PDB" id="5AHV">
    <property type="method" value="EM"/>
    <property type="resolution" value="13.60 A"/>
    <property type="chains" value="F=5-272"/>
</dbReference>
<dbReference type="PDB" id="7B2L">
    <property type="method" value="EM"/>
    <property type="resolution" value="3.90 A"/>
    <property type="chains" value="B/D/G/I/L/N/Q/S=1-286"/>
</dbReference>
<dbReference type="PDBsum" id="5AHV"/>
<dbReference type="PDBsum" id="7B2L"/>
<dbReference type="EMDB" id="EMD-11987"/>
<dbReference type="EMDB" id="EMD-2896"/>
<dbReference type="EMDB" id="EMD-2897"/>
<dbReference type="SMR" id="P33338"/>
<dbReference type="BioGRID" id="35596">
    <property type="interactions" value="937"/>
</dbReference>
<dbReference type="DIP" id="DIP-973N"/>
<dbReference type="FunCoup" id="P33338">
    <property type="interactions" value="325"/>
</dbReference>
<dbReference type="IntAct" id="P33338">
    <property type="interactions" value="32"/>
</dbReference>
<dbReference type="MINT" id="P33338"/>
<dbReference type="STRING" id="4932.YNL243W"/>
<dbReference type="GlyGen" id="P33338">
    <property type="glycosylation" value="1 site"/>
</dbReference>
<dbReference type="iPTMnet" id="P33338"/>
<dbReference type="PaxDb" id="4932-YNL243W"/>
<dbReference type="PeptideAtlas" id="P33338"/>
<dbReference type="EnsemblFungi" id="YNL243W_mRNA">
    <property type="protein sequence ID" value="YNL243W"/>
    <property type="gene ID" value="YNL243W"/>
</dbReference>
<dbReference type="GeneID" id="855478"/>
<dbReference type="KEGG" id="sce:YNL243W"/>
<dbReference type="AGR" id="SGD:S000005187"/>
<dbReference type="SGD" id="S000005187">
    <property type="gene designation" value="SLA2"/>
</dbReference>
<dbReference type="VEuPathDB" id="FungiDB:YNL243W"/>
<dbReference type="eggNOG" id="KOG0980">
    <property type="taxonomic scope" value="Eukaryota"/>
</dbReference>
<dbReference type="GeneTree" id="ENSGT00940000153594"/>
<dbReference type="HOGENOM" id="CLU_004601_0_0_1"/>
<dbReference type="InParanoid" id="P33338"/>
<dbReference type="OMA" id="FQMSVEM"/>
<dbReference type="OrthoDB" id="10262320at2759"/>
<dbReference type="BioCyc" id="YEAST:G3O-33240-MONOMER"/>
<dbReference type="BioGRID-ORCS" id="855478">
    <property type="hits" value="10 hits in 10 CRISPR screens"/>
</dbReference>
<dbReference type="CD-CODE" id="E019EF73">
    <property type="entry name" value="Ede1 condensate"/>
</dbReference>
<dbReference type="EvolutionaryTrace" id="P33338"/>
<dbReference type="PRO" id="PR:P33338"/>
<dbReference type="Proteomes" id="UP000002311">
    <property type="component" value="Chromosome XIV"/>
</dbReference>
<dbReference type="RNAct" id="P33338">
    <property type="molecule type" value="protein"/>
</dbReference>
<dbReference type="GO" id="GO:0030479">
    <property type="term" value="C:actin cortical patch"/>
    <property type="evidence" value="ECO:0000314"/>
    <property type="project" value="SGD"/>
</dbReference>
<dbReference type="GO" id="GO:0005935">
    <property type="term" value="C:cellular bud neck"/>
    <property type="evidence" value="ECO:0007005"/>
    <property type="project" value="SGD"/>
</dbReference>
<dbReference type="GO" id="GO:0005934">
    <property type="term" value="C:cellular bud tip"/>
    <property type="evidence" value="ECO:0007669"/>
    <property type="project" value="UniProtKB-SubCell"/>
</dbReference>
<dbReference type="GO" id="GO:0030136">
    <property type="term" value="C:clathrin-coated vesicle"/>
    <property type="evidence" value="ECO:0000318"/>
    <property type="project" value="GO_Central"/>
</dbReference>
<dbReference type="GO" id="GO:0030864">
    <property type="term" value="C:cortical actin cytoskeleton"/>
    <property type="evidence" value="ECO:0000318"/>
    <property type="project" value="GO_Central"/>
</dbReference>
<dbReference type="GO" id="GO:0000131">
    <property type="term" value="C:incipient cellular bud site"/>
    <property type="evidence" value="ECO:0000314"/>
    <property type="project" value="SGD"/>
</dbReference>
<dbReference type="GO" id="GO:0043332">
    <property type="term" value="C:mating projection tip"/>
    <property type="evidence" value="ECO:0007005"/>
    <property type="project" value="SGD"/>
</dbReference>
<dbReference type="GO" id="GO:0005886">
    <property type="term" value="C:plasma membrane"/>
    <property type="evidence" value="ECO:0007669"/>
    <property type="project" value="UniProtKB-SubCell"/>
</dbReference>
<dbReference type="GO" id="GO:0051015">
    <property type="term" value="F:actin filament binding"/>
    <property type="evidence" value="ECO:0000318"/>
    <property type="project" value="GO_Central"/>
</dbReference>
<dbReference type="GO" id="GO:0035615">
    <property type="term" value="F:clathrin adaptor activity"/>
    <property type="evidence" value="ECO:0000318"/>
    <property type="project" value="GO_Central"/>
</dbReference>
<dbReference type="GO" id="GO:0032051">
    <property type="term" value="F:clathrin light chain binding"/>
    <property type="evidence" value="ECO:0000318"/>
    <property type="project" value="GO_Central"/>
</dbReference>
<dbReference type="GO" id="GO:0043325">
    <property type="term" value="F:phosphatidylinositol-3,4-bisphosphate binding"/>
    <property type="evidence" value="ECO:0000318"/>
    <property type="project" value="GO_Central"/>
</dbReference>
<dbReference type="GO" id="GO:0080025">
    <property type="term" value="F:phosphatidylinositol-3,5-bisphosphate binding"/>
    <property type="evidence" value="ECO:0000318"/>
    <property type="project" value="GO_Central"/>
</dbReference>
<dbReference type="GO" id="GO:0000147">
    <property type="term" value="P:actin cortical patch assembly"/>
    <property type="evidence" value="ECO:0000315"/>
    <property type="project" value="SGD"/>
</dbReference>
<dbReference type="GO" id="GO:0007015">
    <property type="term" value="P:actin filament organization"/>
    <property type="evidence" value="ECO:0000315"/>
    <property type="project" value="SGD"/>
</dbReference>
<dbReference type="GO" id="GO:0048268">
    <property type="term" value="P:clathrin coat assembly"/>
    <property type="evidence" value="ECO:0000318"/>
    <property type="project" value="GO_Central"/>
</dbReference>
<dbReference type="GO" id="GO:0006897">
    <property type="term" value="P:endocytosis"/>
    <property type="evidence" value="ECO:0000315"/>
    <property type="project" value="SGD"/>
</dbReference>
<dbReference type="GO" id="GO:0034316">
    <property type="term" value="P:negative regulation of Arp2/3 complex-mediated actin nucleation"/>
    <property type="evidence" value="ECO:0000314"/>
    <property type="project" value="SGD"/>
</dbReference>
<dbReference type="CDD" id="cd17007">
    <property type="entry name" value="ANTH_N_Sla2p"/>
    <property type="match status" value="1"/>
</dbReference>
<dbReference type="FunFam" id="1.20.1410.10:FF:000009">
    <property type="entry name" value="Sla2p"/>
    <property type="match status" value="1"/>
</dbReference>
<dbReference type="Gene3D" id="1.25.40.90">
    <property type="match status" value="1"/>
</dbReference>
<dbReference type="Gene3D" id="1.20.1410.10">
    <property type="entry name" value="I/LWEQ domain"/>
    <property type="match status" value="1"/>
</dbReference>
<dbReference type="InterPro" id="IPR011417">
    <property type="entry name" value="ANTH_dom"/>
</dbReference>
<dbReference type="InterPro" id="IPR013809">
    <property type="entry name" value="ENTH"/>
</dbReference>
<dbReference type="InterPro" id="IPR008942">
    <property type="entry name" value="ENTH_VHS"/>
</dbReference>
<dbReference type="InterPro" id="IPR035964">
    <property type="entry name" value="I/LWEQ_dom_sf"/>
</dbReference>
<dbReference type="InterPro" id="IPR002558">
    <property type="entry name" value="ILWEQ_dom"/>
</dbReference>
<dbReference type="InterPro" id="IPR030224">
    <property type="entry name" value="Sla2_fam"/>
</dbReference>
<dbReference type="PANTHER" id="PTHR10407">
    <property type="entry name" value="HUNTINGTIN INTERACTING PROTEIN 1"/>
    <property type="match status" value="1"/>
</dbReference>
<dbReference type="PANTHER" id="PTHR10407:SF15">
    <property type="entry name" value="HUNTINGTIN INTERACTING PROTEIN 1"/>
    <property type="match status" value="1"/>
</dbReference>
<dbReference type="Pfam" id="PF07651">
    <property type="entry name" value="ANTH"/>
    <property type="match status" value="1"/>
</dbReference>
<dbReference type="Pfam" id="PF01608">
    <property type="entry name" value="I_LWEQ"/>
    <property type="match status" value="1"/>
</dbReference>
<dbReference type="SMART" id="SM00273">
    <property type="entry name" value="ENTH"/>
    <property type="match status" value="1"/>
</dbReference>
<dbReference type="SMART" id="SM00307">
    <property type="entry name" value="ILWEQ"/>
    <property type="match status" value="1"/>
</dbReference>
<dbReference type="SUPFAM" id="SSF48464">
    <property type="entry name" value="ENTH/VHS domain"/>
    <property type="match status" value="1"/>
</dbReference>
<dbReference type="SUPFAM" id="SSF109885">
    <property type="entry name" value="I/LWEQ domain"/>
    <property type="match status" value="1"/>
</dbReference>
<dbReference type="PROSITE" id="PS50942">
    <property type="entry name" value="ENTH"/>
    <property type="match status" value="1"/>
</dbReference>
<dbReference type="PROSITE" id="PS50945">
    <property type="entry name" value="I_LWEQ"/>
    <property type="match status" value="1"/>
</dbReference>
<reference key="1">
    <citation type="journal article" date="1993" name="J. Cell Biol.">
        <title>Synthetic-lethal interactions identify two novel genes, SLA1 and SLA2, that control membrane cytoskeleton assembly in Saccharomyces cerevisiae.</title>
        <authorList>
            <person name="Holtzman D.A."/>
            <person name="Yang S."/>
            <person name="Drubin D.G."/>
        </authorList>
    </citation>
    <scope>NUCLEOTIDE SEQUENCE [GENOMIC DNA]</scope>
    <source>
        <strain>DDY 228</strain>
    </source>
</reference>
<reference key="2">
    <citation type="journal article" date="1995" name="J. Biol. Chem.">
        <title>MOP2 (SLA2) affects the abundance of the plasma membrane H(+)-ATPase of Saccharomyces cerevisiae.</title>
        <authorList>
            <person name="Na S."/>
            <person name="Hincapie M."/>
            <person name="McCusker J.H."/>
            <person name="Haber J.E."/>
        </authorList>
    </citation>
    <scope>NUCLEOTIDE SEQUENCE [GENOMIC DNA]</scope>
</reference>
<reference key="3">
    <citation type="journal article" date="1997" name="Nature">
        <title>The nucleotide sequence of Saccharomyces cerevisiae chromosome XIV and its evolutionary implications.</title>
        <authorList>
            <person name="Philippsen P."/>
            <person name="Kleine K."/>
            <person name="Poehlmann R."/>
            <person name="Duesterhoeft A."/>
            <person name="Hamberg K."/>
            <person name="Hegemann J.H."/>
            <person name="Obermaier B."/>
            <person name="Urrestarazu L.A."/>
            <person name="Aert R."/>
            <person name="Albermann K."/>
            <person name="Altmann R."/>
            <person name="Andre B."/>
            <person name="Baladron V."/>
            <person name="Ballesta J.P.G."/>
            <person name="Becam A.-M."/>
            <person name="Beinhauer J.D."/>
            <person name="Boskovic J."/>
            <person name="Buitrago M.J."/>
            <person name="Bussereau F."/>
            <person name="Coster F."/>
            <person name="Crouzet M."/>
            <person name="D'Angelo M."/>
            <person name="Dal Pero F."/>
            <person name="De Antoni A."/>
            <person name="del Rey F."/>
            <person name="Doignon F."/>
            <person name="Domdey H."/>
            <person name="Dubois E."/>
            <person name="Fiedler T.A."/>
            <person name="Fleig U."/>
            <person name="Floeth M."/>
            <person name="Fritz C."/>
            <person name="Gaillardin C."/>
            <person name="Garcia-Cantalejo J.M."/>
            <person name="Glansdorff N."/>
            <person name="Goffeau A."/>
            <person name="Gueldener U."/>
            <person name="Herbert C.J."/>
            <person name="Heumann K."/>
            <person name="Heuss-Neitzel D."/>
            <person name="Hilbert H."/>
            <person name="Hinni K."/>
            <person name="Iraqui Houssaini I."/>
            <person name="Jacquet M."/>
            <person name="Jimenez A."/>
            <person name="Jonniaux J.-L."/>
            <person name="Karpfinger-Hartl L."/>
            <person name="Lanfranchi G."/>
            <person name="Lepingle A."/>
            <person name="Levesque H."/>
            <person name="Lyck R."/>
            <person name="Maftahi M."/>
            <person name="Mallet L."/>
            <person name="Maurer C.T.C."/>
            <person name="Messenguy F."/>
            <person name="Mewes H.-W."/>
            <person name="Moestl D."/>
            <person name="Nasr F."/>
            <person name="Nicaud J.-M."/>
            <person name="Niedenthal R.K."/>
            <person name="Pandolfo D."/>
            <person name="Pierard A."/>
            <person name="Piravandi E."/>
            <person name="Planta R.J."/>
            <person name="Pohl T.M."/>
            <person name="Purnelle B."/>
            <person name="Rebischung C."/>
            <person name="Remacha M.A."/>
            <person name="Revuelta J.L."/>
            <person name="Rinke M."/>
            <person name="Saiz J.E."/>
            <person name="Sartorello F."/>
            <person name="Scherens B."/>
            <person name="Sen-Gupta M."/>
            <person name="Soler-Mira A."/>
            <person name="Urbanus J.H.M."/>
            <person name="Valle G."/>
            <person name="Van Dyck L."/>
            <person name="Verhasselt P."/>
            <person name="Vierendeels F."/>
            <person name="Vissers S."/>
            <person name="Voet M."/>
            <person name="Volckaert G."/>
            <person name="Wach A."/>
            <person name="Wambutt R."/>
            <person name="Wedler H."/>
            <person name="Zollner A."/>
            <person name="Hani J."/>
        </authorList>
    </citation>
    <scope>NUCLEOTIDE SEQUENCE [LARGE SCALE GENOMIC DNA]</scope>
    <source>
        <strain>ATCC 204508 / S288c</strain>
    </source>
</reference>
<reference key="4">
    <citation type="journal article" date="2014" name="G3 (Bethesda)">
        <title>The reference genome sequence of Saccharomyces cerevisiae: Then and now.</title>
        <authorList>
            <person name="Engel S.R."/>
            <person name="Dietrich F.S."/>
            <person name="Fisk D.G."/>
            <person name="Binkley G."/>
            <person name="Balakrishnan R."/>
            <person name="Costanzo M.C."/>
            <person name="Dwight S.S."/>
            <person name="Hitz B.C."/>
            <person name="Karra K."/>
            <person name="Nash R.S."/>
            <person name="Weng S."/>
            <person name="Wong E.D."/>
            <person name="Lloyd P."/>
            <person name="Skrzypek M.S."/>
            <person name="Miyasato S.R."/>
            <person name="Simison M."/>
            <person name="Cherry J.M."/>
        </authorList>
    </citation>
    <scope>GENOME REANNOTATION</scope>
    <scope>SEQUENCE REVISION TO 344</scope>
    <source>
        <strain>ATCC 204508 / S288c</strain>
    </source>
</reference>
<reference key="5">
    <citation type="submission" date="1995-06" db="EMBL/GenBank/DDBJ databases">
        <title>DNA sequence of ufg1 gene in yeast.</title>
        <authorList>
            <person name="Yoon H."/>
            <person name="Donahue T.F."/>
        </authorList>
    </citation>
    <scope>NUCLEOTIDE SEQUENCE OF 327-968</scope>
    <source>
        <strain>117-8A</strain>
    </source>
</reference>
<reference key="6">
    <citation type="journal article" date="1996" name="Yeast">
        <title>The DNA sequence of cosmid 14-5 from chromosome XIV reveals 21 open reading frames including a novel gene encoding a globin-like domain.</title>
        <authorList>
            <person name="Pandolfo D."/>
            <person name="de Antoni A."/>
            <person name="Lanfranchi G."/>
            <person name="Valle G."/>
        </authorList>
    </citation>
    <scope>NUCLEOTIDE SEQUENCE [GENOMIC DNA] OF 820-968</scope>
</reference>
<reference key="7">
    <citation type="journal article" date="2003" name="Nature">
        <title>Global analysis of protein expression in yeast.</title>
        <authorList>
            <person name="Ghaemmaghami S."/>
            <person name="Huh W.-K."/>
            <person name="Bower K."/>
            <person name="Howson R.W."/>
            <person name="Belle A."/>
            <person name="Dephoure N."/>
            <person name="O'Shea E.K."/>
            <person name="Weissman J.S."/>
        </authorList>
    </citation>
    <scope>LEVEL OF PROTEIN EXPRESSION [LARGE SCALE ANALYSIS]</scope>
</reference>
<reference key="8">
    <citation type="journal article" date="2007" name="J. Proteome Res.">
        <title>Large-scale phosphorylation analysis of alpha-factor-arrested Saccharomyces cerevisiae.</title>
        <authorList>
            <person name="Li X."/>
            <person name="Gerber S.A."/>
            <person name="Rudner A.D."/>
            <person name="Beausoleil S.A."/>
            <person name="Haas W."/>
            <person name="Villen J."/>
            <person name="Elias J.E."/>
            <person name="Gygi S.P."/>
        </authorList>
    </citation>
    <scope>PHOSPHORYLATION [LARGE SCALE ANALYSIS] AT THR-294 AND SER-308</scope>
    <scope>IDENTIFICATION BY MASS SPECTROMETRY [LARGE SCALE ANALYSIS]</scope>
    <source>
        <strain>ADR376</strain>
    </source>
</reference>
<reference key="9">
    <citation type="journal article" date="2008" name="Mol. Cell. Proteomics">
        <title>A multidimensional chromatography technology for in-depth phosphoproteome analysis.</title>
        <authorList>
            <person name="Albuquerque C.P."/>
            <person name="Smolka M.B."/>
            <person name="Payne S.H."/>
            <person name="Bafna V."/>
            <person name="Eng J."/>
            <person name="Zhou H."/>
        </authorList>
    </citation>
    <scope>PHOSPHORYLATION [LARGE SCALE ANALYSIS] AT SER-555</scope>
    <scope>IDENTIFICATION BY MASS SPECTROMETRY [LARGE SCALE ANALYSIS]</scope>
</reference>
<reference key="10">
    <citation type="journal article" date="2009" name="Science">
        <title>Global analysis of Cdk1 substrate phosphorylation sites provides insights into evolution.</title>
        <authorList>
            <person name="Holt L.J."/>
            <person name="Tuch B.B."/>
            <person name="Villen J."/>
            <person name="Johnson A.D."/>
            <person name="Gygi S.P."/>
            <person name="Morgan D.O."/>
        </authorList>
    </citation>
    <scope>PHOSPHORYLATION [LARGE SCALE ANALYSIS] AT THR-298 AND SER-308</scope>
    <scope>IDENTIFICATION BY MASS SPECTROMETRY [LARGE SCALE ANALYSIS]</scope>
</reference>
<proteinExistence type="evidence at protein level"/>
<gene>
    <name type="primary">SLA2</name>
    <name type="synonym">END4</name>
    <name type="synonym">MOP2</name>
    <name type="synonym">UFG1</name>
    <name type="ordered locus">YNL243W</name>
    <name type="ORF">N1102</name>
</gene>
<accession>P33338</accession>
<accession>D6W0V0</accession>
<accession>Q02434</accession>
<sequence>MSRIDSDLQKALKKACSVEETAPKRKHVRACIVYTWDHQSSKAVFTTLKTLPLANDEVQLFKMLIVLHKIIQEGHPSALAEAIRDRDWIRSLGRVHSGGSSYSKLIREYVRYLVLKLDFHAHHRGFNNGTFEYEEYVSLVSVSDPDEGYETILDLMSLQDSLDEFSQIIFASIQSERRNTECKISALIPLIAESYGIYKFITSMLRAMHRQLNDAEGDAALQPLKERYELQHARLFEFYADCSSVKYLTTLVTIPKLPVDAPDVFLINDVDESKEIKFKKREPSVTPARTPARTPTPTPPVVAEPAISPRPVSQRTTSTPTGYLQTMPTGATTGMMIPTATGAANAIFPQATAQMQPDFWANQQAQFANEQNRLEQERVQQLQQQQAQQELFQQQLQKAQQDMMNMQLQQQNQHQNDLIALTNQYEKDQALLQQYDQRVQQLESEITTMDSTASKQLANKDEQLTALQDQLDVWERKYESLAKLYSQLRQEHLNLLPRFKKLQLKVNSAQESIQKKEQLEHKLKQKDLQMAELVKDRDRARLELERSINNAEADSAAATAAAETMTQDKMNPILDAILESGINTIQESVYNLDSPLSWSGPLTPPTFLLSLLESTSENATEFATSFNNLIVDGLAHGDQTEVIHCVSDFSTSMATLVTNSKAYAVTTLPQEQSDQILTLVKRCAREAQYFFEDLMSENLNQVGDEEKTDIVINANVDMQEKLQELSLAIEPLLNIQSVKSNKETNPHSELVATADKIVKSSEHLRVDVPKPLLSLALMIIDAVVALVKAAIQCQNEIATTTSIPLNQFYLKNSRWTEGLISAAKAVAGATNVLITTASKLITSEDNENTSPEQFIVASKEVAASTIQLVAASRVKTSIHSKAQDKLEHCSKDVTDACRSLGNHVMGMIEDDHSTSQQQQPLDFTSEHTLKTAEMEQQVEILKLEQSLSNARKRLGEIRRHAYYNQDDD</sequence>
<comment type="function">
    <text>Required for cellular morphogenesis and polarization of the cortical cytoskeleton. It might act in concert with proteins such as CDC42 and CDC43 to limit the region of cortical patch formation to the cortex of the bud. Required for the accumulation and/or maintenance of plasma membrane H(+)-ATPase on the cell surface.</text>
</comment>
<comment type="interaction">
    <interactant intactId="EBI-17323">
        <id>P33338</id>
    </interactant>
    <interactant intactId="EBI-31494">
        <id>Q12518</id>
        <label>ENT1</label>
    </interactant>
    <organismsDiffer>false</organismsDiffer>
    <experiments>3</experiments>
</comment>
<comment type="interaction">
    <interactant intactId="EBI-17323">
        <id>P33338</id>
    </interactant>
    <interactant intactId="EBI-10022">
        <id>Q12446</id>
        <label>LAS17</label>
    </interactant>
    <organismsDiffer>false</organismsDiffer>
    <experiments>3</experiments>
</comment>
<comment type="interaction">
    <interactant intactId="EBI-17323">
        <id>P33338</id>
    </interactant>
    <interactant intactId="EBI-17313">
        <id>P32790</id>
        <label>SLA1</label>
    </interactant>
    <organismsDiffer>false</organismsDiffer>
    <experiments>3</experiments>
</comment>
<comment type="subcellular location">
    <subcellularLocation>
        <location evidence="5">Cell membrane</location>
        <topology evidence="1">Single-pass membrane protein</topology>
    </subcellularLocation>
    <subcellularLocation>
        <location>Cytoplasm</location>
        <location>Cytoskeleton</location>
        <location>Actin patch</location>
    </subcellularLocation>
    <subcellularLocation>
        <location>Cytoplasm</location>
        <location>Cell cortex</location>
    </subcellularLocation>
    <subcellularLocation>
        <location>Bud tip</location>
    </subcellularLocation>
</comment>
<comment type="miscellaneous">
    <text evidence="4">Present with 40600 molecules/cell in log phase SD medium.</text>
</comment>
<comment type="similarity">
    <text evidence="5">Belongs to the SLA2 family.</text>
</comment>
<comment type="sequence caution" evidence="5">
    <conflict type="frameshift">
        <sequence resource="EMBL-CDS" id="AAA19161"/>
    </conflict>
</comment>
<evidence type="ECO:0000255" key="1">
    <source>
        <dbReference type="PROSITE-ProRule" id="PRU00243"/>
    </source>
</evidence>
<evidence type="ECO:0000255" key="2">
    <source>
        <dbReference type="PROSITE-ProRule" id="PRU00292"/>
    </source>
</evidence>
<evidence type="ECO:0000256" key="3">
    <source>
        <dbReference type="SAM" id="MobiDB-lite"/>
    </source>
</evidence>
<evidence type="ECO:0000269" key="4">
    <source>
    </source>
</evidence>
<evidence type="ECO:0000305" key="5"/>
<evidence type="ECO:0007744" key="6">
    <source>
    </source>
</evidence>
<evidence type="ECO:0007744" key="7">
    <source>
    </source>
</evidence>
<evidence type="ECO:0007744" key="8">
    <source>
    </source>
</evidence>
<protein>
    <recommendedName>
        <fullName>Protein SLA2</fullName>
    </recommendedName>
    <alternativeName>
        <fullName>Transmembrane protein MOP2</fullName>
    </alternativeName>
</protein>